<evidence type="ECO:0000255" key="1">
    <source>
        <dbReference type="HAMAP-Rule" id="MF_01861"/>
    </source>
</evidence>
<name>Y1088_BACP2</name>
<gene>
    <name type="ordered locus">BPUM_1088</name>
</gene>
<organism>
    <name type="scientific">Bacillus pumilus (strain SAFR-032)</name>
    <dbReference type="NCBI Taxonomy" id="315750"/>
    <lineage>
        <taxon>Bacteria</taxon>
        <taxon>Bacillati</taxon>
        <taxon>Bacillota</taxon>
        <taxon>Bacilli</taxon>
        <taxon>Bacillales</taxon>
        <taxon>Bacillaceae</taxon>
        <taxon>Bacillus</taxon>
    </lineage>
</organism>
<sequence length="121" mass="13905">MQNRIEIAEATLKEDRLILTTKSEEQIQKAKASGQMLVDSDHFAFVYILENEESFSYLILGEDTWAPLKEAMTLDIPVYLAAEGHSLELIQLHQELHYLIDNIKDNANYGDMEEKVKSTFL</sequence>
<protein>
    <recommendedName>
        <fullName evidence="1">UPF0738 protein BPUM_1088</fullName>
    </recommendedName>
</protein>
<accession>A8FC05</accession>
<reference key="1">
    <citation type="journal article" date="2007" name="PLoS ONE">
        <title>Paradoxical DNA repair and peroxide resistance gene conservation in Bacillus pumilus SAFR-032.</title>
        <authorList>
            <person name="Gioia J."/>
            <person name="Yerrapragada S."/>
            <person name="Qin X."/>
            <person name="Jiang H."/>
            <person name="Igboeli O.C."/>
            <person name="Muzny D."/>
            <person name="Dugan-Rocha S."/>
            <person name="Ding Y."/>
            <person name="Hawes A."/>
            <person name="Liu W."/>
            <person name="Perez L."/>
            <person name="Kovar C."/>
            <person name="Dinh H."/>
            <person name="Lee S."/>
            <person name="Nazareth L."/>
            <person name="Blyth P."/>
            <person name="Holder M."/>
            <person name="Buhay C."/>
            <person name="Tirumalai M.R."/>
            <person name="Liu Y."/>
            <person name="Dasgupta I."/>
            <person name="Bokhetache L."/>
            <person name="Fujita M."/>
            <person name="Karouia F."/>
            <person name="Eswara Moorthy P."/>
            <person name="Siefert J."/>
            <person name="Uzman A."/>
            <person name="Buzumbo P."/>
            <person name="Verma A."/>
            <person name="Zwiya H."/>
            <person name="McWilliams B.D."/>
            <person name="Olowu A."/>
            <person name="Clinkenbeard K.D."/>
            <person name="Newcombe D."/>
            <person name="Golebiewski L."/>
            <person name="Petrosino J.F."/>
            <person name="Nicholson W.L."/>
            <person name="Fox G.E."/>
            <person name="Venkateswaran K."/>
            <person name="Highlander S.K."/>
            <person name="Weinstock G.M."/>
        </authorList>
    </citation>
    <scope>NUCLEOTIDE SEQUENCE [LARGE SCALE GENOMIC DNA]</scope>
    <source>
        <strain>SAFR-032</strain>
    </source>
</reference>
<reference key="2">
    <citation type="journal article" date="2016" name="PLoS ONE">
        <title>Bacillus pumilus SAFR-032 Genome Revisited: Sequence Update and Re-Annotation.</title>
        <authorList>
            <person name="Stepanov V.G."/>
            <person name="Tirumalai M.R."/>
            <person name="Montazari S."/>
            <person name="Checinska A."/>
            <person name="Venkateswaran K."/>
            <person name="Fox G.E."/>
        </authorList>
    </citation>
    <scope>SEQUENCE REVISION TO N-TERMINUS</scope>
    <source>
        <strain>SAFR-032</strain>
    </source>
</reference>
<feature type="chain" id="PRO_0000369649" description="UPF0738 protein BPUM_1088">
    <location>
        <begin position="1"/>
        <end position="121"/>
    </location>
</feature>
<proteinExistence type="inferred from homology"/>
<dbReference type="EMBL" id="CP000813">
    <property type="protein sequence ID" value="ABV61772.2"/>
    <property type="molecule type" value="Genomic_DNA"/>
</dbReference>
<dbReference type="RefSeq" id="WP_041815407.1">
    <property type="nucleotide sequence ID" value="NZ_VEIS01000013.1"/>
</dbReference>
<dbReference type="STRING" id="315750.BPUM_1088"/>
<dbReference type="GeneID" id="5620351"/>
<dbReference type="KEGG" id="bpu:BPUM_1088"/>
<dbReference type="eggNOG" id="ENOG5032YMN">
    <property type="taxonomic scope" value="Bacteria"/>
</dbReference>
<dbReference type="HOGENOM" id="CLU_142282_0_0_9"/>
<dbReference type="OrthoDB" id="2966478at2"/>
<dbReference type="Proteomes" id="UP000001355">
    <property type="component" value="Chromosome"/>
</dbReference>
<dbReference type="HAMAP" id="MF_01861">
    <property type="entry name" value="UPF0738"/>
    <property type="match status" value="1"/>
</dbReference>
<dbReference type="InterPro" id="IPR020908">
    <property type="entry name" value="UPF0738"/>
</dbReference>
<dbReference type="Pfam" id="PF19785">
    <property type="entry name" value="UPF0738"/>
    <property type="match status" value="1"/>
</dbReference>
<comment type="similarity">
    <text evidence="1">Belongs to the UPF0738 family.</text>
</comment>